<accession>Q8UFM0</accession>
<comment type="function">
    <text evidence="1">Responsible for the release of ribosomes from messenger RNA at the termination of protein biosynthesis. May increase the efficiency of translation by recycling ribosomes from one round of translation to another.</text>
</comment>
<comment type="subcellular location">
    <subcellularLocation>
        <location evidence="1">Cytoplasm</location>
    </subcellularLocation>
</comment>
<comment type="similarity">
    <text evidence="1">Belongs to the RRF family.</text>
</comment>
<name>RRF_AGRFC</name>
<keyword id="KW-0963">Cytoplasm</keyword>
<keyword id="KW-0648">Protein biosynthesis</keyword>
<keyword id="KW-1185">Reference proteome</keyword>
<reference key="1">
    <citation type="journal article" date="2001" name="Science">
        <title>The genome of the natural genetic engineer Agrobacterium tumefaciens C58.</title>
        <authorList>
            <person name="Wood D.W."/>
            <person name="Setubal J.C."/>
            <person name="Kaul R."/>
            <person name="Monks D.E."/>
            <person name="Kitajima J.P."/>
            <person name="Okura V.K."/>
            <person name="Zhou Y."/>
            <person name="Chen L."/>
            <person name="Wood G.E."/>
            <person name="Almeida N.F. Jr."/>
            <person name="Woo L."/>
            <person name="Chen Y."/>
            <person name="Paulsen I.T."/>
            <person name="Eisen J.A."/>
            <person name="Karp P.D."/>
            <person name="Bovee D. Sr."/>
            <person name="Chapman P."/>
            <person name="Clendenning J."/>
            <person name="Deatherage G."/>
            <person name="Gillet W."/>
            <person name="Grant C."/>
            <person name="Kutyavin T."/>
            <person name="Levy R."/>
            <person name="Li M.-J."/>
            <person name="McClelland E."/>
            <person name="Palmieri A."/>
            <person name="Raymond C."/>
            <person name="Rouse G."/>
            <person name="Saenphimmachak C."/>
            <person name="Wu Z."/>
            <person name="Romero P."/>
            <person name="Gordon D."/>
            <person name="Zhang S."/>
            <person name="Yoo H."/>
            <person name="Tao Y."/>
            <person name="Biddle P."/>
            <person name="Jung M."/>
            <person name="Krespan W."/>
            <person name="Perry M."/>
            <person name="Gordon-Kamm B."/>
            <person name="Liao L."/>
            <person name="Kim S."/>
            <person name="Hendrick C."/>
            <person name="Zhao Z.-Y."/>
            <person name="Dolan M."/>
            <person name="Chumley F."/>
            <person name="Tingey S.V."/>
            <person name="Tomb J.-F."/>
            <person name="Gordon M.P."/>
            <person name="Olson M.V."/>
            <person name="Nester E.W."/>
        </authorList>
    </citation>
    <scope>NUCLEOTIDE SEQUENCE [LARGE SCALE GENOMIC DNA]</scope>
    <source>
        <strain>C58 / ATCC 33970</strain>
    </source>
</reference>
<reference key="2">
    <citation type="journal article" date="2001" name="Science">
        <title>Genome sequence of the plant pathogen and biotechnology agent Agrobacterium tumefaciens C58.</title>
        <authorList>
            <person name="Goodner B."/>
            <person name="Hinkle G."/>
            <person name="Gattung S."/>
            <person name="Miller N."/>
            <person name="Blanchard M."/>
            <person name="Qurollo B."/>
            <person name="Goldman B.S."/>
            <person name="Cao Y."/>
            <person name="Askenazi M."/>
            <person name="Halling C."/>
            <person name="Mullin L."/>
            <person name="Houmiel K."/>
            <person name="Gordon J."/>
            <person name="Vaudin M."/>
            <person name="Iartchouk O."/>
            <person name="Epp A."/>
            <person name="Liu F."/>
            <person name="Wollam C."/>
            <person name="Allinger M."/>
            <person name="Doughty D."/>
            <person name="Scott C."/>
            <person name="Lappas C."/>
            <person name="Markelz B."/>
            <person name="Flanagan C."/>
            <person name="Crowell C."/>
            <person name="Gurson J."/>
            <person name="Lomo C."/>
            <person name="Sear C."/>
            <person name="Strub G."/>
            <person name="Cielo C."/>
            <person name="Slater S."/>
        </authorList>
    </citation>
    <scope>NUCLEOTIDE SEQUENCE [LARGE SCALE GENOMIC DNA]</scope>
    <source>
        <strain>C58 / ATCC 33970</strain>
    </source>
</reference>
<feature type="chain" id="PRO_0000167398" description="Ribosome-recycling factor">
    <location>
        <begin position="1"/>
        <end position="185"/>
    </location>
</feature>
<feature type="region of interest" description="Disordered" evidence="2">
    <location>
        <begin position="137"/>
        <end position="166"/>
    </location>
</feature>
<organism>
    <name type="scientific">Agrobacterium fabrum (strain C58 / ATCC 33970)</name>
    <name type="common">Agrobacterium tumefaciens (strain C58)</name>
    <dbReference type="NCBI Taxonomy" id="176299"/>
    <lineage>
        <taxon>Bacteria</taxon>
        <taxon>Pseudomonadati</taxon>
        <taxon>Pseudomonadota</taxon>
        <taxon>Alphaproteobacteria</taxon>
        <taxon>Hyphomicrobiales</taxon>
        <taxon>Rhizobiaceae</taxon>
        <taxon>Rhizobium/Agrobacterium group</taxon>
        <taxon>Agrobacterium</taxon>
        <taxon>Agrobacterium tumefaciens complex</taxon>
    </lineage>
</organism>
<evidence type="ECO:0000255" key="1">
    <source>
        <dbReference type="HAMAP-Rule" id="MF_00040"/>
    </source>
</evidence>
<evidence type="ECO:0000256" key="2">
    <source>
        <dbReference type="SAM" id="MobiDB-lite"/>
    </source>
</evidence>
<proteinExistence type="inferred from homology"/>
<gene>
    <name evidence="1" type="primary">frr</name>
    <name type="synonym">rrf</name>
    <name type="ordered locus">Atu1377</name>
    <name type="ORF">AGR_C_2546</name>
</gene>
<protein>
    <recommendedName>
        <fullName evidence="1">Ribosome-recycling factor</fullName>
        <shortName evidence="1">RRF</shortName>
    </recommendedName>
    <alternativeName>
        <fullName evidence="1">Ribosome-releasing factor</fullName>
    </alternativeName>
</protein>
<sequence>MSGIDLNDIKRRMDGAINAFKSDIASLRTGRASANILDPVTIDAYGSRVPLNQVANITVPEPRMLGVNIWDKSMVNAVDRAIRESNLGLNPIVDGQNLRIPLPELNEERRKSLVKVAHEYSEKAKVAIRHVRRDGMDGLKKAEKDGDIGQDESRGQSEKVQKMTDDTISEIDRLLAEKEKEIMQV</sequence>
<dbReference type="EMBL" id="AE007869">
    <property type="protein sequence ID" value="AAK87169.1"/>
    <property type="molecule type" value="Genomic_DNA"/>
</dbReference>
<dbReference type="PIR" id="AI2745">
    <property type="entry name" value="AI2745"/>
</dbReference>
<dbReference type="PIR" id="H97526">
    <property type="entry name" value="H97526"/>
</dbReference>
<dbReference type="RefSeq" id="NP_354384.1">
    <property type="nucleotide sequence ID" value="NC_003062.2"/>
</dbReference>
<dbReference type="RefSeq" id="WP_006312543.1">
    <property type="nucleotide sequence ID" value="NC_003062.2"/>
</dbReference>
<dbReference type="SMR" id="Q8UFM0"/>
<dbReference type="STRING" id="176299.Atu1377"/>
<dbReference type="EnsemblBacteria" id="AAK87169">
    <property type="protein sequence ID" value="AAK87169"/>
    <property type="gene ID" value="Atu1377"/>
</dbReference>
<dbReference type="GeneID" id="1133415"/>
<dbReference type="KEGG" id="atu:Atu1377"/>
<dbReference type="PATRIC" id="fig|176299.10.peg.1400"/>
<dbReference type="eggNOG" id="COG0233">
    <property type="taxonomic scope" value="Bacteria"/>
</dbReference>
<dbReference type="HOGENOM" id="CLU_073981_2_0_5"/>
<dbReference type="OrthoDB" id="9804006at2"/>
<dbReference type="PhylomeDB" id="Q8UFM0"/>
<dbReference type="BioCyc" id="AGRO:ATU1377-MONOMER"/>
<dbReference type="Proteomes" id="UP000000813">
    <property type="component" value="Chromosome circular"/>
</dbReference>
<dbReference type="GO" id="GO:0005829">
    <property type="term" value="C:cytosol"/>
    <property type="evidence" value="ECO:0007669"/>
    <property type="project" value="GOC"/>
</dbReference>
<dbReference type="GO" id="GO:0043023">
    <property type="term" value="F:ribosomal large subunit binding"/>
    <property type="evidence" value="ECO:0007669"/>
    <property type="project" value="TreeGrafter"/>
</dbReference>
<dbReference type="GO" id="GO:0002184">
    <property type="term" value="P:cytoplasmic translational termination"/>
    <property type="evidence" value="ECO:0007669"/>
    <property type="project" value="TreeGrafter"/>
</dbReference>
<dbReference type="CDD" id="cd00520">
    <property type="entry name" value="RRF"/>
    <property type="match status" value="1"/>
</dbReference>
<dbReference type="FunFam" id="1.10.132.20:FF:000001">
    <property type="entry name" value="Ribosome-recycling factor"/>
    <property type="match status" value="1"/>
</dbReference>
<dbReference type="FunFam" id="3.30.1360.40:FF:000001">
    <property type="entry name" value="Ribosome-recycling factor"/>
    <property type="match status" value="1"/>
</dbReference>
<dbReference type="Gene3D" id="3.30.1360.40">
    <property type="match status" value="1"/>
</dbReference>
<dbReference type="Gene3D" id="1.10.132.20">
    <property type="entry name" value="Ribosome-recycling factor"/>
    <property type="match status" value="1"/>
</dbReference>
<dbReference type="HAMAP" id="MF_00040">
    <property type="entry name" value="RRF"/>
    <property type="match status" value="1"/>
</dbReference>
<dbReference type="InterPro" id="IPR002661">
    <property type="entry name" value="Ribosome_recyc_fac"/>
</dbReference>
<dbReference type="InterPro" id="IPR023584">
    <property type="entry name" value="Ribosome_recyc_fac_dom"/>
</dbReference>
<dbReference type="InterPro" id="IPR036191">
    <property type="entry name" value="RRF_sf"/>
</dbReference>
<dbReference type="NCBIfam" id="TIGR00496">
    <property type="entry name" value="frr"/>
    <property type="match status" value="1"/>
</dbReference>
<dbReference type="PANTHER" id="PTHR20982:SF3">
    <property type="entry name" value="MITOCHONDRIAL RIBOSOME RECYCLING FACTOR PSEUDO 1"/>
    <property type="match status" value="1"/>
</dbReference>
<dbReference type="PANTHER" id="PTHR20982">
    <property type="entry name" value="RIBOSOME RECYCLING FACTOR"/>
    <property type="match status" value="1"/>
</dbReference>
<dbReference type="Pfam" id="PF01765">
    <property type="entry name" value="RRF"/>
    <property type="match status" value="1"/>
</dbReference>
<dbReference type="SUPFAM" id="SSF55194">
    <property type="entry name" value="Ribosome recycling factor, RRF"/>
    <property type="match status" value="1"/>
</dbReference>